<keyword id="KW-0067">ATP-binding</keyword>
<keyword id="KW-0315">Glutamine amidotransferase</keyword>
<keyword id="KW-0332">GMP biosynthesis</keyword>
<keyword id="KW-0436">Ligase</keyword>
<keyword id="KW-0547">Nucleotide-binding</keyword>
<keyword id="KW-0658">Purine biosynthesis</keyword>
<reference key="1">
    <citation type="journal article" date="2011" name="J. Bacteriol.">
        <title>Comparative genomics of 28 Salmonella enterica isolates: evidence for CRISPR-mediated adaptive sublineage evolution.</title>
        <authorList>
            <person name="Fricke W.F."/>
            <person name="Mammel M.K."/>
            <person name="McDermott P.F."/>
            <person name="Tartera C."/>
            <person name="White D.G."/>
            <person name="Leclerc J.E."/>
            <person name="Ravel J."/>
            <person name="Cebula T.A."/>
        </authorList>
    </citation>
    <scope>NUCLEOTIDE SEQUENCE [LARGE SCALE GENOMIC DNA]</scope>
    <source>
        <strain>SL476</strain>
    </source>
</reference>
<gene>
    <name evidence="1" type="primary">guaA</name>
    <name type="ordered locus">SeHA_C2766</name>
</gene>
<comment type="function">
    <text evidence="1">Catalyzes the synthesis of GMP from XMP.</text>
</comment>
<comment type="catalytic activity">
    <reaction evidence="1">
        <text>XMP + L-glutamine + ATP + H2O = GMP + L-glutamate + AMP + diphosphate + 2 H(+)</text>
        <dbReference type="Rhea" id="RHEA:11680"/>
        <dbReference type="ChEBI" id="CHEBI:15377"/>
        <dbReference type="ChEBI" id="CHEBI:15378"/>
        <dbReference type="ChEBI" id="CHEBI:29985"/>
        <dbReference type="ChEBI" id="CHEBI:30616"/>
        <dbReference type="ChEBI" id="CHEBI:33019"/>
        <dbReference type="ChEBI" id="CHEBI:57464"/>
        <dbReference type="ChEBI" id="CHEBI:58115"/>
        <dbReference type="ChEBI" id="CHEBI:58359"/>
        <dbReference type="ChEBI" id="CHEBI:456215"/>
        <dbReference type="EC" id="6.3.5.2"/>
    </reaction>
</comment>
<comment type="pathway">
    <text evidence="1">Purine metabolism; GMP biosynthesis; GMP from XMP (L-Gln route): step 1/1.</text>
</comment>
<comment type="subunit">
    <text evidence="1">Homodimer.</text>
</comment>
<evidence type="ECO:0000255" key="1">
    <source>
        <dbReference type="HAMAP-Rule" id="MF_00344"/>
    </source>
</evidence>
<name>GUAA_SALHS</name>
<protein>
    <recommendedName>
        <fullName evidence="1">GMP synthase [glutamine-hydrolyzing]</fullName>
        <ecNumber evidence="1">6.3.5.2</ecNumber>
    </recommendedName>
    <alternativeName>
        <fullName evidence="1">GMP synthetase</fullName>
    </alternativeName>
    <alternativeName>
        <fullName evidence="1">Glutamine amidotransferase</fullName>
    </alternativeName>
</protein>
<dbReference type="EC" id="6.3.5.2" evidence="1"/>
<dbReference type="EMBL" id="CP001120">
    <property type="protein sequence ID" value="ACF69506.1"/>
    <property type="molecule type" value="Genomic_DNA"/>
</dbReference>
<dbReference type="RefSeq" id="WP_000138293.1">
    <property type="nucleotide sequence ID" value="NC_011083.1"/>
</dbReference>
<dbReference type="SMR" id="B4TD82"/>
<dbReference type="MEROPS" id="C26.957"/>
<dbReference type="KEGG" id="seh:SeHA_C2766"/>
<dbReference type="HOGENOM" id="CLU_014340_0_5_6"/>
<dbReference type="UniPathway" id="UPA00189">
    <property type="reaction ID" value="UER00296"/>
</dbReference>
<dbReference type="Proteomes" id="UP000001866">
    <property type="component" value="Chromosome"/>
</dbReference>
<dbReference type="GO" id="GO:0005829">
    <property type="term" value="C:cytosol"/>
    <property type="evidence" value="ECO:0007669"/>
    <property type="project" value="TreeGrafter"/>
</dbReference>
<dbReference type="GO" id="GO:0005524">
    <property type="term" value="F:ATP binding"/>
    <property type="evidence" value="ECO:0007669"/>
    <property type="project" value="UniProtKB-UniRule"/>
</dbReference>
<dbReference type="GO" id="GO:0003921">
    <property type="term" value="F:GMP synthase activity"/>
    <property type="evidence" value="ECO:0007669"/>
    <property type="project" value="InterPro"/>
</dbReference>
<dbReference type="CDD" id="cd01742">
    <property type="entry name" value="GATase1_GMP_Synthase"/>
    <property type="match status" value="1"/>
</dbReference>
<dbReference type="CDD" id="cd01997">
    <property type="entry name" value="GMP_synthase_C"/>
    <property type="match status" value="1"/>
</dbReference>
<dbReference type="FunFam" id="3.30.300.10:FF:000002">
    <property type="entry name" value="GMP synthase [glutamine-hydrolyzing]"/>
    <property type="match status" value="1"/>
</dbReference>
<dbReference type="FunFam" id="3.40.50.620:FF:000001">
    <property type="entry name" value="GMP synthase [glutamine-hydrolyzing]"/>
    <property type="match status" value="1"/>
</dbReference>
<dbReference type="FunFam" id="3.40.50.880:FF:000001">
    <property type="entry name" value="GMP synthase [glutamine-hydrolyzing]"/>
    <property type="match status" value="1"/>
</dbReference>
<dbReference type="Gene3D" id="3.30.300.10">
    <property type="match status" value="1"/>
</dbReference>
<dbReference type="Gene3D" id="3.40.50.880">
    <property type="match status" value="1"/>
</dbReference>
<dbReference type="Gene3D" id="3.40.50.620">
    <property type="entry name" value="HUPs"/>
    <property type="match status" value="1"/>
</dbReference>
<dbReference type="HAMAP" id="MF_00344">
    <property type="entry name" value="GMP_synthase"/>
    <property type="match status" value="1"/>
</dbReference>
<dbReference type="InterPro" id="IPR029062">
    <property type="entry name" value="Class_I_gatase-like"/>
</dbReference>
<dbReference type="InterPro" id="IPR017926">
    <property type="entry name" value="GATASE"/>
</dbReference>
<dbReference type="InterPro" id="IPR001674">
    <property type="entry name" value="GMP_synth_C"/>
</dbReference>
<dbReference type="InterPro" id="IPR004739">
    <property type="entry name" value="GMP_synth_GATase"/>
</dbReference>
<dbReference type="InterPro" id="IPR022955">
    <property type="entry name" value="GMP_synthase"/>
</dbReference>
<dbReference type="InterPro" id="IPR025777">
    <property type="entry name" value="GMPS_ATP_PPase_dom"/>
</dbReference>
<dbReference type="InterPro" id="IPR022310">
    <property type="entry name" value="NAD/GMP_synthase"/>
</dbReference>
<dbReference type="InterPro" id="IPR014729">
    <property type="entry name" value="Rossmann-like_a/b/a_fold"/>
</dbReference>
<dbReference type="NCBIfam" id="TIGR00884">
    <property type="entry name" value="guaA_Cterm"/>
    <property type="match status" value="1"/>
</dbReference>
<dbReference type="NCBIfam" id="TIGR00888">
    <property type="entry name" value="guaA_Nterm"/>
    <property type="match status" value="1"/>
</dbReference>
<dbReference type="NCBIfam" id="NF000848">
    <property type="entry name" value="PRK00074.1"/>
    <property type="match status" value="1"/>
</dbReference>
<dbReference type="PANTHER" id="PTHR11922:SF2">
    <property type="entry name" value="GMP SYNTHASE [GLUTAMINE-HYDROLYZING]"/>
    <property type="match status" value="1"/>
</dbReference>
<dbReference type="PANTHER" id="PTHR11922">
    <property type="entry name" value="GMP SYNTHASE-RELATED"/>
    <property type="match status" value="1"/>
</dbReference>
<dbReference type="Pfam" id="PF00117">
    <property type="entry name" value="GATase"/>
    <property type="match status" value="1"/>
</dbReference>
<dbReference type="Pfam" id="PF00958">
    <property type="entry name" value="GMP_synt_C"/>
    <property type="match status" value="1"/>
</dbReference>
<dbReference type="Pfam" id="PF02540">
    <property type="entry name" value="NAD_synthase"/>
    <property type="match status" value="1"/>
</dbReference>
<dbReference type="PRINTS" id="PR00097">
    <property type="entry name" value="ANTSNTHASEII"/>
</dbReference>
<dbReference type="PRINTS" id="PR00099">
    <property type="entry name" value="CPSGATASE"/>
</dbReference>
<dbReference type="PRINTS" id="PR00096">
    <property type="entry name" value="GATASE"/>
</dbReference>
<dbReference type="SUPFAM" id="SSF52402">
    <property type="entry name" value="Adenine nucleotide alpha hydrolases-like"/>
    <property type="match status" value="1"/>
</dbReference>
<dbReference type="SUPFAM" id="SSF52317">
    <property type="entry name" value="Class I glutamine amidotransferase-like"/>
    <property type="match status" value="1"/>
</dbReference>
<dbReference type="SUPFAM" id="SSF54810">
    <property type="entry name" value="GMP synthetase C-terminal dimerisation domain"/>
    <property type="match status" value="1"/>
</dbReference>
<dbReference type="PROSITE" id="PS51273">
    <property type="entry name" value="GATASE_TYPE_1"/>
    <property type="match status" value="1"/>
</dbReference>
<dbReference type="PROSITE" id="PS51553">
    <property type="entry name" value="GMPS_ATP_PPASE"/>
    <property type="match status" value="1"/>
</dbReference>
<accession>B4TD82</accession>
<sequence length="525" mass="58686">MTENIHKHRILILDFGSQYTQLVARRVRELGVYCELWAWDVTEAQIRDFNPSGIILSGGPESTTEENSPRAPQYVFEAGVPVFGVCYGMQTMAMQLGGHVEGSNEREFGYAQVEVLTDSALVRGIEDSLTADGKPLLDVWMSHGDKVTAIPSDFVTVASTESCPFAIMANEEKRFYGVQFHPEVTHTRQGMRMLERFVRDICQCEALWTPAKIIDDAVARIREQVGDDKVILGLSGGVDSSVTAMLLHRAIGKNLTCVFVDNGLLRLNEAEQVMDMFGDHFGLNIVHVPAEDRFLSALAGENDPEAKRKIIGRVFVEVFDEEALKLEDVKWLAQGTIYPDVIESAASATGKAHVIKSHHNVGGLPKEMKMGLVEPLKELFKDEVRKIGLELGLPYDMLYRHPFPGPGLGVRVLGEVKKEYCDLLRRADAIFIEELRKADLYDKVSQAFTVFLPVRSVGVMGDGRKYDWVVSLRAVETIDFMTAHWAHLPYDFLGRVSNRIINEVNGISRVVYDISGKPPATIEWE</sequence>
<organism>
    <name type="scientific">Salmonella heidelberg (strain SL476)</name>
    <dbReference type="NCBI Taxonomy" id="454169"/>
    <lineage>
        <taxon>Bacteria</taxon>
        <taxon>Pseudomonadati</taxon>
        <taxon>Pseudomonadota</taxon>
        <taxon>Gammaproteobacteria</taxon>
        <taxon>Enterobacterales</taxon>
        <taxon>Enterobacteriaceae</taxon>
        <taxon>Salmonella</taxon>
    </lineage>
</organism>
<proteinExistence type="inferred from homology"/>
<feature type="chain" id="PRO_1000120391" description="GMP synthase [glutamine-hydrolyzing]">
    <location>
        <begin position="1"/>
        <end position="525"/>
    </location>
</feature>
<feature type="domain" description="Glutamine amidotransferase type-1" evidence="1">
    <location>
        <begin position="9"/>
        <end position="207"/>
    </location>
</feature>
<feature type="domain" description="GMPS ATP-PPase" evidence="1">
    <location>
        <begin position="208"/>
        <end position="400"/>
    </location>
</feature>
<feature type="active site" description="Nucleophile" evidence="1">
    <location>
        <position position="86"/>
    </location>
</feature>
<feature type="active site" evidence="1">
    <location>
        <position position="181"/>
    </location>
</feature>
<feature type="active site" evidence="1">
    <location>
        <position position="183"/>
    </location>
</feature>
<feature type="binding site" evidence="1">
    <location>
        <begin position="235"/>
        <end position="241"/>
    </location>
    <ligand>
        <name>ATP</name>
        <dbReference type="ChEBI" id="CHEBI:30616"/>
    </ligand>
</feature>